<accession>Q99661</accession>
<accession>B3ITR9</accession>
<accession>Q5JR88</accession>
<accession>Q6ICU1</accession>
<accession>Q96C18</accession>
<accession>Q96HB8</accession>
<accession>Q9BWV8</accession>
<feature type="initiator methionine" description="Removed" evidence="23">
    <location>
        <position position="1"/>
    </location>
</feature>
<feature type="chain" id="PRO_0000125418" description="Kinesin-like protein KIF2C">
    <location>
        <begin position="2"/>
        <end position="725"/>
    </location>
</feature>
<feature type="domain" description="Kinesin motor" evidence="4">
    <location>
        <begin position="258"/>
        <end position="588"/>
    </location>
</feature>
<feature type="region of interest" description="Globular" evidence="3">
    <location>
        <begin position="2"/>
        <end position="254"/>
    </location>
</feature>
<feature type="region of interest" description="Disordered" evidence="5">
    <location>
        <begin position="89"/>
        <end position="116"/>
    </location>
</feature>
<feature type="region of interest" description="Negative regulator of microtubule-binding" evidence="1">
    <location>
        <begin position="207"/>
        <end position="238"/>
    </location>
</feature>
<feature type="coiled-coil region" evidence="3">
    <location>
        <begin position="618"/>
        <end position="658"/>
    </location>
</feature>
<feature type="short sequence motif" description="Microtubule tip localization signal">
    <location>
        <begin position="98"/>
        <end position="101"/>
    </location>
</feature>
<feature type="short sequence motif" description="Nuclear localization signal" evidence="3">
    <location>
        <begin position="415"/>
        <end position="418"/>
    </location>
</feature>
<feature type="binding site" evidence="1">
    <location>
        <position position="264"/>
    </location>
    <ligand>
        <name>ATP</name>
        <dbReference type="ChEBI" id="CHEBI:30616"/>
    </ligand>
</feature>
<feature type="binding site">
    <location>
        <begin position="348"/>
        <end position="355"/>
    </location>
    <ligand>
        <name>ATP</name>
        <dbReference type="ChEBI" id="CHEBI:30616"/>
    </ligand>
</feature>
<feature type="modified residue" description="N-acetylalanine" evidence="23">
    <location>
        <position position="2"/>
    </location>
</feature>
<feature type="modified residue" description="Phosphoserine" evidence="24">
    <location>
        <position position="6"/>
    </location>
</feature>
<feature type="modified residue" description="Phosphoserine" evidence="22 24">
    <location>
        <position position="22"/>
    </location>
</feature>
<feature type="modified residue" description="Phosphoserine; by AURKB" evidence="8">
    <location>
        <position position="95"/>
    </location>
</feature>
<feature type="modified residue" description="Phosphoserine" evidence="24">
    <location>
        <position position="106"/>
    </location>
</feature>
<feature type="modified residue" description="Phosphoserine" evidence="2">
    <location>
        <position position="109"/>
    </location>
</feature>
<feature type="modified residue" description="Phosphoserine" evidence="2">
    <location>
        <position position="111"/>
    </location>
</feature>
<feature type="modified residue" description="Phosphoserine" evidence="24">
    <location>
        <position position="115"/>
    </location>
</feature>
<feature type="modified residue" description="Phosphoserine" evidence="21 24">
    <location>
        <position position="166"/>
    </location>
</feature>
<feature type="modified residue" description="Phosphoserine" evidence="24">
    <location>
        <position position="175"/>
    </location>
</feature>
<feature type="modified residue" description="Phosphoserine" evidence="24">
    <location>
        <position position="187"/>
    </location>
</feature>
<feature type="modified residue" description="Phosphoserine" evidence="2">
    <location>
        <position position="192"/>
    </location>
</feature>
<feature type="modified residue" description="Phosphoserine" evidence="24">
    <location>
        <position position="519"/>
    </location>
</feature>
<feature type="modified residue" description="Phosphoserine" evidence="22">
    <location>
        <position position="621"/>
    </location>
</feature>
<feature type="modified residue" description="Phosphoserine" evidence="22">
    <location>
        <position position="633"/>
    </location>
</feature>
<feature type="splice variant" id="VSP_002866" description="In isoform 2." evidence="19">
    <original>MAMDSSLQARLFPGLAIKIQRSNGLIHSANVRTVNLEKSCVSVEWAEGGATKGKE</original>
    <variation>M</variation>
    <location>
        <begin position="1"/>
        <end position="55"/>
    </location>
</feature>
<feature type="sequence variant" id="VAR_049683" description="In dbSNP:rs4342887." evidence="7 16 18">
    <original>I</original>
    <variation>L</variation>
    <location>
        <position position="449"/>
    </location>
</feature>
<feature type="mutagenesis site" description="Alters interaction with MAPRE1 and association with microtubule growing ends; when associated with E-109 and E-111." evidence="12">
    <original>S</original>
    <variation>E</variation>
    <location>
        <position position="95"/>
    </location>
</feature>
<feature type="mutagenesis site" description="Loss of interaction with MAPRE1 and association with microtubule growing ends." evidence="12">
    <original>IP</original>
    <variation>NN</variation>
    <location>
        <begin position="100"/>
        <end position="101"/>
    </location>
</feature>
<feature type="mutagenesis site" description="Alters interaction with MAPRE1 and association with microtubule growing ends; when associated with E-95 and E-111." evidence="12">
    <original>S</original>
    <variation>E</variation>
    <location>
        <position position="109"/>
    </location>
</feature>
<feature type="mutagenesis site" description="Alters interaction with MAPRE1 and association with microtubule growing ends; when associated with E-95 and E-109." evidence="12">
    <original>S</original>
    <variation>E</variation>
    <location>
        <position position="111"/>
    </location>
</feature>
<feature type="sequence conflict" description="In Ref. 8; AAH08764." evidence="20" ref="8">
    <original>R</original>
    <variation>P</variation>
    <location>
        <position position="698"/>
    </location>
</feature>
<feature type="helix" evidence="25">
    <location>
        <begin position="230"/>
        <end position="242"/>
    </location>
</feature>
<feature type="strand" evidence="28">
    <location>
        <begin position="250"/>
        <end position="252"/>
    </location>
</feature>
<feature type="strand" evidence="25">
    <location>
        <begin position="258"/>
        <end position="265"/>
    </location>
</feature>
<feature type="helix" evidence="25">
    <location>
        <begin position="270"/>
        <end position="274"/>
    </location>
</feature>
<feature type="strand" evidence="25">
    <location>
        <begin position="285"/>
        <end position="296"/>
    </location>
</feature>
<feature type="strand" evidence="27">
    <location>
        <begin position="297"/>
        <end position="299"/>
    </location>
</feature>
<feature type="strand" evidence="25">
    <location>
        <begin position="302"/>
        <end position="310"/>
    </location>
</feature>
<feature type="strand" evidence="25">
    <location>
        <begin position="312"/>
        <end position="315"/>
    </location>
</feature>
<feature type="helix" evidence="25">
    <location>
        <begin position="321"/>
        <end position="327"/>
    </location>
</feature>
<feature type="helix" evidence="25">
    <location>
        <begin position="330"/>
        <end position="337"/>
    </location>
</feature>
<feature type="strand" evidence="25">
    <location>
        <begin position="341"/>
        <end position="348"/>
    </location>
</feature>
<feature type="helix" evidence="25">
    <location>
        <begin position="354"/>
        <end position="358"/>
    </location>
</feature>
<feature type="helix" evidence="25">
    <location>
        <begin position="373"/>
        <end position="385"/>
    </location>
</feature>
<feature type="helix" evidence="25">
    <location>
        <begin position="388"/>
        <end position="391"/>
    </location>
</feature>
<feature type="turn" evidence="25">
    <location>
        <begin position="392"/>
        <end position="394"/>
    </location>
</feature>
<feature type="strand" evidence="25">
    <location>
        <begin position="396"/>
        <end position="405"/>
    </location>
</feature>
<feature type="strand" evidence="25">
    <location>
        <begin position="408"/>
        <end position="411"/>
    </location>
</feature>
<feature type="turn" evidence="25">
    <location>
        <begin position="412"/>
        <end position="416"/>
    </location>
</feature>
<feature type="strand" evidence="25">
    <location>
        <begin position="420"/>
        <end position="423"/>
    </location>
</feature>
<feature type="strand" evidence="28">
    <location>
        <begin position="425"/>
        <end position="427"/>
    </location>
</feature>
<feature type="strand" evidence="25">
    <location>
        <begin position="429"/>
        <end position="432"/>
    </location>
</feature>
<feature type="strand" evidence="25">
    <location>
        <begin position="437"/>
        <end position="441"/>
    </location>
</feature>
<feature type="helix" evidence="25">
    <location>
        <begin position="442"/>
        <end position="455"/>
    </location>
</feature>
<feature type="helix" evidence="25">
    <location>
        <begin position="467"/>
        <end position="469"/>
    </location>
</feature>
<feature type="strand" evidence="25">
    <location>
        <begin position="470"/>
        <end position="492"/>
    </location>
</feature>
<feature type="strand" evidence="28">
    <location>
        <begin position="499"/>
        <end position="502"/>
    </location>
</feature>
<feature type="strand" evidence="26">
    <location>
        <begin position="507"/>
        <end position="509"/>
    </location>
</feature>
<feature type="helix" evidence="25">
    <location>
        <begin position="514"/>
        <end position="531"/>
    </location>
</feature>
<feature type="helix" evidence="25">
    <location>
        <begin position="539"/>
        <end position="541"/>
    </location>
</feature>
<feature type="helix" evidence="25">
    <location>
        <begin position="543"/>
        <end position="547"/>
    </location>
</feature>
<feature type="helix" evidence="25">
    <location>
        <begin position="549"/>
        <end position="552"/>
    </location>
</feature>
<feature type="strand" evidence="25">
    <location>
        <begin position="557"/>
        <end position="565"/>
    </location>
</feature>
<feature type="helix" evidence="25">
    <location>
        <begin position="569"/>
        <end position="571"/>
    </location>
</feature>
<feature type="helix" evidence="25">
    <location>
        <begin position="572"/>
        <end position="585"/>
    </location>
</feature>
<keyword id="KW-0002">3D-structure</keyword>
<keyword id="KW-0007">Acetylation</keyword>
<keyword id="KW-0025">Alternative splicing</keyword>
<keyword id="KW-0067">ATP-binding</keyword>
<keyword id="KW-0131">Cell cycle</keyword>
<keyword id="KW-0132">Cell division</keyword>
<keyword id="KW-0137">Centromere</keyword>
<keyword id="KW-0158">Chromosome</keyword>
<keyword id="KW-0159">Chromosome partition</keyword>
<keyword id="KW-0175">Coiled coil</keyword>
<keyword id="KW-0963">Cytoplasm</keyword>
<keyword id="KW-0206">Cytoskeleton</keyword>
<keyword id="KW-0995">Kinetochore</keyword>
<keyword id="KW-0493">Microtubule</keyword>
<keyword id="KW-0498">Mitosis</keyword>
<keyword id="KW-0547">Nucleotide-binding</keyword>
<keyword id="KW-0539">Nucleus</keyword>
<keyword id="KW-0597">Phosphoprotein</keyword>
<keyword id="KW-1267">Proteomics identification</keyword>
<keyword id="KW-1185">Reference proteome</keyword>
<keyword id="KW-0832">Ubl conjugation</keyword>
<proteinExistence type="evidence at protein level"/>
<organism>
    <name type="scientific">Homo sapiens</name>
    <name type="common">Human</name>
    <dbReference type="NCBI Taxonomy" id="9606"/>
    <lineage>
        <taxon>Eukaryota</taxon>
        <taxon>Metazoa</taxon>
        <taxon>Chordata</taxon>
        <taxon>Craniata</taxon>
        <taxon>Vertebrata</taxon>
        <taxon>Euteleostomi</taxon>
        <taxon>Mammalia</taxon>
        <taxon>Eutheria</taxon>
        <taxon>Euarchontoglires</taxon>
        <taxon>Primates</taxon>
        <taxon>Haplorrhini</taxon>
        <taxon>Catarrhini</taxon>
        <taxon>Hominidae</taxon>
        <taxon>Homo</taxon>
    </lineage>
</organism>
<protein>
    <recommendedName>
        <fullName>Kinesin-like protein KIF2C</fullName>
    </recommendedName>
    <alternativeName>
        <fullName>Kinesin-like protein 6</fullName>
    </alternativeName>
    <alternativeName>
        <fullName>Mitotic centromere-associated kinesin</fullName>
        <shortName>MCAK</shortName>
    </alternativeName>
</protein>
<reference key="1">
    <citation type="journal article" date="1997" name="Biochim. Biophys. Acta">
        <title>Cloning and expression of human mitotic centromere-associated kinesin gene.</title>
        <authorList>
            <person name="Kim I.-G."/>
            <person name="Jun D.Y."/>
            <person name="Sohn U."/>
            <person name="Kim Y.H."/>
        </authorList>
    </citation>
    <scope>NUCLEOTIDE SEQUENCE [MRNA] (ISOFORM 1)</scope>
    <scope>VARIANT LEU-449</scope>
    <scope>TISSUE SPECIFICITY</scope>
    <source>
        <tissue>T-cell</tissue>
    </source>
</reference>
<reference key="2">
    <citation type="journal article" date="2002" name="Life Sci.">
        <title>Expression of a novel HsMCAK mRNA splice variant, tsMCAK gene, in human testis.</title>
        <authorList>
            <person name="Cheng L.J."/>
            <person name="Zhou Z.M."/>
            <person name="Li J.M."/>
            <person name="Zhu H."/>
            <person name="Zhu H."/>
            <person name="Zhou Y.D."/>
            <person name="Wang L.R."/>
            <person name="Lin M."/>
            <person name="Sha J.H."/>
        </authorList>
    </citation>
    <scope>NUCLEOTIDE SEQUENCE [MRNA] (ISOFORM 2)</scope>
    <scope>VARIANT LEU-449</scope>
    <scope>TISSUE SPECIFICITY</scope>
    <scope>DEVELOPMENTAL STAGE</scope>
    <source>
        <tissue>Testis</tissue>
    </source>
</reference>
<reference key="3">
    <citation type="submission" date="2003-05" db="EMBL/GenBank/DDBJ databases">
        <title>Cloning of human full-length CDSs in BD Creator(TM) system donor vector.</title>
        <authorList>
            <person name="Kalnine N."/>
            <person name="Chen X."/>
            <person name="Rolfs A."/>
            <person name="Halleck A."/>
            <person name="Hines L."/>
            <person name="Eisenstein S."/>
            <person name="Koundinya M."/>
            <person name="Raphael J."/>
            <person name="Moreira D."/>
            <person name="Kelley T."/>
            <person name="LaBaer J."/>
            <person name="Lin Y."/>
            <person name="Phelan M."/>
            <person name="Farmer A."/>
        </authorList>
    </citation>
    <scope>NUCLEOTIDE SEQUENCE [LARGE SCALE MRNA] (ISOFORM 1)</scope>
</reference>
<reference key="4">
    <citation type="submission" date="2004-05" db="EMBL/GenBank/DDBJ databases">
        <title>Cloning of human full open reading frames in Gateway(TM) system entry vector (pDONR201).</title>
        <authorList>
            <person name="Ebert L."/>
            <person name="Schick M."/>
            <person name="Neubert P."/>
            <person name="Schatten R."/>
            <person name="Henze S."/>
            <person name="Korn B."/>
        </authorList>
    </citation>
    <scope>NUCLEOTIDE SEQUENCE [LARGE SCALE MRNA] (ISOFORM 1)</scope>
</reference>
<reference key="5">
    <citation type="submission" date="2006-06" db="EMBL/GenBank/DDBJ databases">
        <title>MCAK/KIF2c V1.</title>
        <authorList>
            <person name="Katagiri T."/>
            <person name="Shimo A."/>
        </authorList>
    </citation>
    <scope>NUCLEOTIDE SEQUENCE [MRNA] (ISOFORM 1)</scope>
    <scope>VARIANT LEU-449</scope>
</reference>
<reference key="6">
    <citation type="journal article" date="2006" name="Nature">
        <title>The DNA sequence and biological annotation of human chromosome 1.</title>
        <authorList>
            <person name="Gregory S.G."/>
            <person name="Barlow K.F."/>
            <person name="McLay K.E."/>
            <person name="Kaul R."/>
            <person name="Swarbreck D."/>
            <person name="Dunham A."/>
            <person name="Scott C.E."/>
            <person name="Howe K.L."/>
            <person name="Woodfine K."/>
            <person name="Spencer C.C.A."/>
            <person name="Jones M.C."/>
            <person name="Gillson C."/>
            <person name="Searle S."/>
            <person name="Zhou Y."/>
            <person name="Kokocinski F."/>
            <person name="McDonald L."/>
            <person name="Evans R."/>
            <person name="Phillips K."/>
            <person name="Atkinson A."/>
            <person name="Cooper R."/>
            <person name="Jones C."/>
            <person name="Hall R.E."/>
            <person name="Andrews T.D."/>
            <person name="Lloyd C."/>
            <person name="Ainscough R."/>
            <person name="Almeida J.P."/>
            <person name="Ambrose K.D."/>
            <person name="Anderson F."/>
            <person name="Andrew R.W."/>
            <person name="Ashwell R.I.S."/>
            <person name="Aubin K."/>
            <person name="Babbage A.K."/>
            <person name="Bagguley C.L."/>
            <person name="Bailey J."/>
            <person name="Beasley H."/>
            <person name="Bethel G."/>
            <person name="Bird C.P."/>
            <person name="Bray-Allen S."/>
            <person name="Brown J.Y."/>
            <person name="Brown A.J."/>
            <person name="Buckley D."/>
            <person name="Burton J."/>
            <person name="Bye J."/>
            <person name="Carder C."/>
            <person name="Chapman J.C."/>
            <person name="Clark S.Y."/>
            <person name="Clarke G."/>
            <person name="Clee C."/>
            <person name="Cobley V."/>
            <person name="Collier R.E."/>
            <person name="Corby N."/>
            <person name="Coville G.J."/>
            <person name="Davies J."/>
            <person name="Deadman R."/>
            <person name="Dunn M."/>
            <person name="Earthrowl M."/>
            <person name="Ellington A.G."/>
            <person name="Errington H."/>
            <person name="Frankish A."/>
            <person name="Frankland J."/>
            <person name="French L."/>
            <person name="Garner P."/>
            <person name="Garnett J."/>
            <person name="Gay L."/>
            <person name="Ghori M.R.J."/>
            <person name="Gibson R."/>
            <person name="Gilby L.M."/>
            <person name="Gillett W."/>
            <person name="Glithero R.J."/>
            <person name="Grafham D.V."/>
            <person name="Griffiths C."/>
            <person name="Griffiths-Jones S."/>
            <person name="Grocock R."/>
            <person name="Hammond S."/>
            <person name="Harrison E.S.I."/>
            <person name="Hart E."/>
            <person name="Haugen E."/>
            <person name="Heath P.D."/>
            <person name="Holmes S."/>
            <person name="Holt K."/>
            <person name="Howden P.J."/>
            <person name="Hunt A.R."/>
            <person name="Hunt S.E."/>
            <person name="Hunter G."/>
            <person name="Isherwood J."/>
            <person name="James R."/>
            <person name="Johnson C."/>
            <person name="Johnson D."/>
            <person name="Joy A."/>
            <person name="Kay M."/>
            <person name="Kershaw J.K."/>
            <person name="Kibukawa M."/>
            <person name="Kimberley A.M."/>
            <person name="King A."/>
            <person name="Knights A.J."/>
            <person name="Lad H."/>
            <person name="Laird G."/>
            <person name="Lawlor S."/>
            <person name="Leongamornlert D.A."/>
            <person name="Lloyd D.M."/>
            <person name="Loveland J."/>
            <person name="Lovell J."/>
            <person name="Lush M.J."/>
            <person name="Lyne R."/>
            <person name="Martin S."/>
            <person name="Mashreghi-Mohammadi M."/>
            <person name="Matthews L."/>
            <person name="Matthews N.S.W."/>
            <person name="McLaren S."/>
            <person name="Milne S."/>
            <person name="Mistry S."/>
            <person name="Moore M.J.F."/>
            <person name="Nickerson T."/>
            <person name="O'Dell C.N."/>
            <person name="Oliver K."/>
            <person name="Palmeiri A."/>
            <person name="Palmer S.A."/>
            <person name="Parker A."/>
            <person name="Patel D."/>
            <person name="Pearce A.V."/>
            <person name="Peck A.I."/>
            <person name="Pelan S."/>
            <person name="Phelps K."/>
            <person name="Phillimore B.J."/>
            <person name="Plumb R."/>
            <person name="Rajan J."/>
            <person name="Raymond C."/>
            <person name="Rouse G."/>
            <person name="Saenphimmachak C."/>
            <person name="Sehra H.K."/>
            <person name="Sheridan E."/>
            <person name="Shownkeen R."/>
            <person name="Sims S."/>
            <person name="Skuce C.D."/>
            <person name="Smith M."/>
            <person name="Steward C."/>
            <person name="Subramanian S."/>
            <person name="Sycamore N."/>
            <person name="Tracey A."/>
            <person name="Tromans A."/>
            <person name="Van Helmond Z."/>
            <person name="Wall M."/>
            <person name="Wallis J.M."/>
            <person name="White S."/>
            <person name="Whitehead S.L."/>
            <person name="Wilkinson J.E."/>
            <person name="Willey D.L."/>
            <person name="Williams H."/>
            <person name="Wilming L."/>
            <person name="Wray P.W."/>
            <person name="Wu Z."/>
            <person name="Coulson A."/>
            <person name="Vaudin M."/>
            <person name="Sulston J.E."/>
            <person name="Durbin R.M."/>
            <person name="Hubbard T."/>
            <person name="Wooster R."/>
            <person name="Dunham I."/>
            <person name="Carter N.P."/>
            <person name="McVean G."/>
            <person name="Ross M.T."/>
            <person name="Harrow J."/>
            <person name="Olson M.V."/>
            <person name="Beck S."/>
            <person name="Rogers J."/>
            <person name="Bentley D.R."/>
        </authorList>
    </citation>
    <scope>NUCLEOTIDE SEQUENCE [LARGE SCALE GENOMIC DNA]</scope>
</reference>
<reference key="7">
    <citation type="submission" date="2005-09" db="EMBL/GenBank/DDBJ databases">
        <authorList>
            <person name="Mural R.J."/>
            <person name="Istrail S."/>
            <person name="Sutton G.G."/>
            <person name="Florea L."/>
            <person name="Halpern A.L."/>
            <person name="Mobarry C.M."/>
            <person name="Lippert R."/>
            <person name="Walenz B."/>
            <person name="Shatkay H."/>
            <person name="Dew I."/>
            <person name="Miller J.R."/>
            <person name="Flanigan M.J."/>
            <person name="Edwards N.J."/>
            <person name="Bolanos R."/>
            <person name="Fasulo D."/>
            <person name="Halldorsson B.V."/>
            <person name="Hannenhalli S."/>
            <person name="Turner R."/>
            <person name="Yooseph S."/>
            <person name="Lu F."/>
            <person name="Nusskern D.R."/>
            <person name="Shue B.C."/>
            <person name="Zheng X.H."/>
            <person name="Zhong F."/>
            <person name="Delcher A.L."/>
            <person name="Huson D.H."/>
            <person name="Kravitz S.A."/>
            <person name="Mouchard L."/>
            <person name="Reinert K."/>
            <person name="Remington K.A."/>
            <person name="Clark A.G."/>
            <person name="Waterman M.S."/>
            <person name="Eichler E.E."/>
            <person name="Adams M.D."/>
            <person name="Hunkapiller M.W."/>
            <person name="Myers E.W."/>
            <person name="Venter J.C."/>
        </authorList>
    </citation>
    <scope>NUCLEOTIDE SEQUENCE [LARGE SCALE GENOMIC DNA]</scope>
</reference>
<reference key="8">
    <citation type="journal article" date="2004" name="Genome Res.">
        <title>The status, quality, and expansion of the NIH full-length cDNA project: the Mammalian Gene Collection (MGC).</title>
        <authorList>
            <consortium name="The MGC Project Team"/>
        </authorList>
    </citation>
    <scope>NUCLEOTIDE SEQUENCE [LARGE SCALE MRNA] (ISOFORM 1)</scope>
    <source>
        <tissue>Kidney</tissue>
        <tissue>Uterus</tissue>
    </source>
</reference>
<reference key="9">
    <citation type="journal article" date="2000" name="Hum. Mol. Genet.">
        <title>Human CENP-H multimers colocalize with CENP-A and CENP-C at active centromere-kinetochore complexes.</title>
        <authorList>
            <person name="Sugata N."/>
            <person name="Li S."/>
            <person name="Earnshaw W.C."/>
            <person name="Yen T.J."/>
            <person name="Yoda K."/>
            <person name="Masumoto H."/>
            <person name="Munekata E."/>
            <person name="Warburton P.E."/>
            <person name="Todokoro K."/>
        </authorList>
    </citation>
    <scope>INTERACTION WITH CENPH</scope>
</reference>
<reference key="10">
    <citation type="journal article" date="2004" name="Dev. Cell">
        <title>Aurora B regulates MCAK at the mitotic centromere.</title>
        <authorList>
            <person name="Andrews P.D."/>
            <person name="Ovechkina Y."/>
            <person name="Morrice N."/>
            <person name="Wagenbach M."/>
            <person name="Duncan K."/>
            <person name="Wordeman L."/>
            <person name="Swedlow J.R."/>
        </authorList>
    </citation>
    <scope>PHOSPHORYLATION AT SER-95 BY AURKB</scope>
    <scope>SUBCELLULAR LOCATION</scope>
</reference>
<reference key="11">
    <citation type="journal article" date="2007" name="J. Cell Biol.">
        <title>Tripin/hSgo2 recruits MCAK to the inner centromere to correct defective kinetochore attachments.</title>
        <authorList>
            <person name="Huang H."/>
            <person name="Feng J."/>
            <person name="Famulski J."/>
            <person name="Rattner J.B."/>
            <person name="Liu S.T."/>
            <person name="Kao G.D."/>
            <person name="Muschel R."/>
            <person name="Chan G.K."/>
            <person name="Yen T.J."/>
        </authorList>
    </citation>
    <scope>SUBCELLULAR LOCATION</scope>
</reference>
<reference key="12">
    <citation type="journal article" date="2007" name="Science">
        <title>ATM and ATR substrate analysis reveals extensive protein networks responsive to DNA damage.</title>
        <authorList>
            <person name="Matsuoka S."/>
            <person name="Ballif B.A."/>
            <person name="Smogorzewska A."/>
            <person name="McDonald E.R. III"/>
            <person name="Hurov K.E."/>
            <person name="Luo J."/>
            <person name="Bakalarski C.E."/>
            <person name="Zhao Z."/>
            <person name="Solimini N."/>
            <person name="Lerenthal Y."/>
            <person name="Shiloh Y."/>
            <person name="Gygi S.P."/>
            <person name="Elledge S.J."/>
        </authorList>
    </citation>
    <scope>IDENTIFICATION BY MASS SPECTROMETRY [LARGE SCALE ANALYSIS]</scope>
    <source>
        <tissue>Embryonic kidney</tissue>
    </source>
</reference>
<reference key="13">
    <citation type="journal article" date="2008" name="Proc. Natl. Acad. Sci. U.S.A.">
        <title>A quantitative atlas of mitotic phosphorylation.</title>
        <authorList>
            <person name="Dephoure N."/>
            <person name="Zhou C."/>
            <person name="Villen J."/>
            <person name="Beausoleil S.A."/>
            <person name="Bakalarski C.E."/>
            <person name="Elledge S.J."/>
            <person name="Gygi S.P."/>
        </authorList>
    </citation>
    <scope>PHOSPHORYLATION [LARGE SCALE ANALYSIS] AT SER-166</scope>
    <scope>IDENTIFICATION BY MASS SPECTROMETRY [LARGE SCALE ANALYSIS]</scope>
    <source>
        <tissue>Cervix carcinoma</tissue>
    </source>
</reference>
<reference key="14">
    <citation type="journal article" date="2009" name="Cell">
        <title>An EB1-binding motif acts as a microtubule tip localization signal.</title>
        <authorList>
            <person name="Honnappa S."/>
            <person name="Gouveia S.M."/>
            <person name="Weisbrich A."/>
            <person name="Damberger F.F."/>
            <person name="Bhavesh N.S."/>
            <person name="Jawhari H."/>
            <person name="Grigoriev I."/>
            <person name="van Rijssel F.J."/>
            <person name="Buey R.M."/>
            <person name="Lawera A."/>
            <person name="Jelesarov I."/>
            <person name="Winkler F.K."/>
            <person name="Wuthrich K."/>
            <person name="Akhmanova A."/>
            <person name="Steinmetz M.O."/>
        </authorList>
    </citation>
    <scope>INTERACTION WITH MAPRE1</scope>
    <scope>SUBCELLULAR LOCATION</scope>
    <scope>DOMAIN MICROTUBULE TIP LOCALIZATION SIGNAL</scope>
    <scope>MUTAGENESIS OF SER-95; 100-ILE-PRO-101; SER-109 AND SER-111</scope>
</reference>
<reference key="15">
    <citation type="journal article" date="2009" name="EMBO Rep.">
        <title>TIP150 interacts with and targets MCAK at the microtubule plus ends.</title>
        <authorList>
            <person name="Jiang K."/>
            <person name="Wang J."/>
            <person name="Liu J."/>
            <person name="Ward T."/>
            <person name="Wordeman L."/>
            <person name="Davidson A."/>
            <person name="Wang F."/>
            <person name="Yao X."/>
        </authorList>
    </citation>
    <scope>INTERACTION WITH MTUS2 AND MAPRE1</scope>
</reference>
<reference key="16">
    <citation type="journal article" date="2009" name="Nat. Cell Biol.">
        <title>Genome stability is ensured by temporal control of kinetochore-microtubule dynamics.</title>
        <authorList>
            <person name="Bakhoum S.F."/>
            <person name="Thompson S.L."/>
            <person name="Manning A.L."/>
            <person name="Compton D.A."/>
        </authorList>
    </citation>
    <scope>FUNCTION</scope>
</reference>
<reference key="17">
    <citation type="journal article" date="2009" name="Sci. Signal.">
        <title>Quantitative phosphoproteomic analysis of T cell receptor signaling reveals system-wide modulation of protein-protein interactions.</title>
        <authorList>
            <person name="Mayya V."/>
            <person name="Lundgren D.H."/>
            <person name="Hwang S.-I."/>
            <person name="Rezaul K."/>
            <person name="Wu L."/>
            <person name="Eng J.K."/>
            <person name="Rodionov V."/>
            <person name="Han D.K."/>
        </authorList>
    </citation>
    <scope>IDENTIFICATION BY MASS SPECTROMETRY [LARGE SCALE ANALYSIS]</scope>
    <source>
        <tissue>Leukemic T-cell</tissue>
    </source>
</reference>
<reference key="18">
    <citation type="journal article" date="2010" name="PLoS ONE">
        <title>Development and validation of a method for profiling post-translational modification activities using protein microarrays.</title>
        <authorList>
            <person name="Del Rincon S.V."/>
            <person name="Rogers J."/>
            <person name="Widschwendter M."/>
            <person name="Sun D."/>
            <person name="Sieburg H.B."/>
            <person name="Spruck C."/>
        </authorList>
    </citation>
    <scope>UBIQUITINATION</scope>
</reference>
<reference key="19">
    <citation type="journal article" date="2010" name="Sci. Signal.">
        <title>Quantitative phosphoproteomics reveals widespread full phosphorylation site occupancy during mitosis.</title>
        <authorList>
            <person name="Olsen J.V."/>
            <person name="Vermeulen M."/>
            <person name="Santamaria A."/>
            <person name="Kumar C."/>
            <person name="Miller M.L."/>
            <person name="Jensen L.J."/>
            <person name="Gnad F."/>
            <person name="Cox J."/>
            <person name="Jensen T.S."/>
            <person name="Nigg E.A."/>
            <person name="Brunak S."/>
            <person name="Mann M."/>
        </authorList>
    </citation>
    <scope>PHOSPHORYLATION [LARGE SCALE ANALYSIS] AT SER-22; SER-621 AND SER-633</scope>
    <scope>IDENTIFICATION BY MASS SPECTROMETRY [LARGE SCALE ANALYSIS]</scope>
    <source>
        <tissue>Cervix carcinoma</tissue>
    </source>
</reference>
<reference key="20">
    <citation type="journal article" date="2011" name="BMC Syst. Biol.">
        <title>Initial characterization of the human central proteome.</title>
        <authorList>
            <person name="Burkard T.R."/>
            <person name="Planyavsky M."/>
            <person name="Kaupe I."/>
            <person name="Breitwieser F.P."/>
            <person name="Buerckstuemmer T."/>
            <person name="Bennett K.L."/>
            <person name="Superti-Furga G."/>
            <person name="Colinge J."/>
        </authorList>
    </citation>
    <scope>IDENTIFICATION BY MASS SPECTROMETRY [LARGE SCALE ANALYSIS]</scope>
</reference>
<reference key="21">
    <citation type="journal article" date="2011" name="Curr. Biol.">
        <title>A complex of Kif18b and MCAK promotes microtubule depolymerization and is negatively regulated by Aurora kinases.</title>
        <authorList>
            <person name="Tanenbaum M.E."/>
            <person name="Macurek L."/>
            <person name="van der Vaart B."/>
            <person name="Galli M."/>
            <person name="Akhmanova A."/>
            <person name="Medema R.H."/>
        </authorList>
    </citation>
    <scope>FUNCTION</scope>
    <scope>INTERACTION WITH KIF18B</scope>
    <scope>SUBCELLULAR LOCATION</scope>
</reference>
<reference key="22">
    <citation type="journal article" date="2012" name="Proc. Natl. Acad. Sci. U.S.A.">
        <title>N-terminal acetylome analyses and functional insights of the N-terminal acetyltransferase NatB.</title>
        <authorList>
            <person name="Van Damme P."/>
            <person name="Lasa M."/>
            <person name="Polevoda B."/>
            <person name="Gazquez C."/>
            <person name="Elosegui-Artola A."/>
            <person name="Kim D.S."/>
            <person name="De Juan-Pardo E."/>
            <person name="Demeyer K."/>
            <person name="Hole K."/>
            <person name="Larrea E."/>
            <person name="Timmerman E."/>
            <person name="Prieto J."/>
            <person name="Arnesen T."/>
            <person name="Sherman F."/>
            <person name="Gevaert K."/>
            <person name="Aldabe R."/>
        </authorList>
    </citation>
    <scope>ACETYLATION [LARGE SCALE ANALYSIS] AT ALA-2</scope>
    <scope>CLEAVAGE OF INITIATOR METHIONINE [LARGE SCALE ANALYSIS]</scope>
    <scope>IDENTIFICATION BY MASS SPECTROMETRY [LARGE SCALE ANALYSIS]</scope>
</reference>
<reference key="23">
    <citation type="journal article" date="2013" name="Curr. Biol.">
        <title>Lateral to end-on conversion of chromosome-microtubule attachment requires kinesins CENP-E and MCAK.</title>
        <authorList>
            <person name="Shrestha R.L."/>
            <person name="Draviam V.M."/>
        </authorList>
    </citation>
    <scope>FUNCTION</scope>
    <scope>SUBCELLULAR LOCATION</scope>
</reference>
<reference key="24">
    <citation type="journal article" date="2013" name="Curr. Biol.">
        <authorList>
            <person name="Shrestha R.L."/>
            <person name="Draviam V.M."/>
        </authorList>
    </citation>
    <scope>ERRATUM OF PUBMED:23891108</scope>
</reference>
<reference key="25">
    <citation type="journal article" date="2013" name="J. Proteome Res.">
        <title>Toward a comprehensive characterization of a human cancer cell phosphoproteome.</title>
        <authorList>
            <person name="Zhou H."/>
            <person name="Di Palma S."/>
            <person name="Preisinger C."/>
            <person name="Peng M."/>
            <person name="Polat A.N."/>
            <person name="Heck A.J."/>
            <person name="Mohammed S."/>
        </authorList>
    </citation>
    <scope>PHOSPHORYLATION [LARGE SCALE ANALYSIS] AT SER-6; SER-22; SER-106; SER-115; SER-166; SER-175; SER-187 AND SER-519</scope>
    <scope>IDENTIFICATION BY MASS SPECTROMETRY [LARGE SCALE ANALYSIS]</scope>
    <source>
        <tissue>Cervix carcinoma</tissue>
        <tissue>Erythroleukemia</tissue>
    </source>
</reference>
<reference key="26">
    <citation type="submission" date="2009-02" db="PDB data bank">
        <title>Crystal structure of the KIF2C motor domain.</title>
        <authorList>
            <consortium name="Structural genomics consortium (SGC)"/>
        </authorList>
    </citation>
    <scope>X-RAY CRYSTALLOGRAPHY (2.15 ANGSTROMS) OF 225-593 IN COMPLEX WITH ADP</scope>
</reference>
<gene>
    <name type="primary">KIF2C</name>
    <name type="synonym">KNSL6</name>
</gene>
<comment type="function">
    <text evidence="10 14 15">In complex with KIF18B, constitutes the major microtubule plus-end depolymerizing activity in mitotic cells (PubMed:21820309). Regulates the turnover of microtubules at the kinetochore and functions in chromosome segregation during mitosis (PubMed:19060894). Plays a role in chromosome congression and is required for the lateral to end-on conversion of the chromosome-microtubule attachment (PubMed:23891108).</text>
</comment>
<comment type="subunit">
    <text evidence="6 11 12 14 17">Interacts with CENPH. Interacts with MTUS2/TIP150; the interaction is direct. Interacts with MAPRE1; the interaction is direct, regulated by phosphorylation and is probably required for targeting to growing microtubule plus ends. Interacts with KIF18B at microtubule tips; this interaction increases the affinity of both partners for microtubule plus ends and is required for robust microtubule depolymerization. Phosphorylation by AURKA or AURKB strongly reduces KIF18B-binding.</text>
</comment>
<comment type="interaction">
    <interactant intactId="EBI-1642317">
        <id>Q99661</id>
    </interactant>
    <interactant intactId="EBI-1004115">
        <id>Q15691</id>
        <label>MAPRE1</label>
    </interactant>
    <organismsDiffer>false</organismsDiffer>
    <experiments>8</experiments>
</comment>
<comment type="interaction">
    <interactant intactId="EBI-1642317">
        <id>Q99661</id>
    </interactant>
    <interactant intactId="EBI-742948">
        <id>Q5JR59</id>
        <label>MTUS2</label>
    </interactant>
    <organismsDiffer>false</organismsDiffer>
    <experiments>4</experiments>
</comment>
<comment type="interaction">
    <interactant intactId="EBI-1642317">
        <id>Q99661</id>
    </interactant>
    <interactant intactId="EBI-743117">
        <id>Q96ES7</id>
        <label>SGF29</label>
    </interactant>
    <organismsDiffer>false</organismsDiffer>
    <experiments>4</experiments>
</comment>
<comment type="subcellular location">
    <subcellularLocation>
        <location evidence="12 14 15">Cytoplasm</location>
        <location evidence="12 14 15">Cytoskeleton</location>
    </subcellularLocation>
    <subcellularLocation>
        <location evidence="2">Nucleus</location>
    </subcellularLocation>
    <subcellularLocation>
        <location evidence="8 9">Chromosome</location>
        <location evidence="8 9">Centromere</location>
    </subcellularLocation>
    <subcellularLocation>
        <location evidence="8 9 15">Chromosome</location>
        <location evidence="8 9 15">Centromere</location>
        <location evidence="8 9 15">Kinetochore</location>
    </subcellularLocation>
    <text evidence="2 9 14">Associates with the microtubule network at the growing distal tip (the plus-end) of microtubules, probably through interaction with MTUS2/TIP150 and MAPRE1 (By similarity). Association with microtubule plus ends is also mediated by interaction with KIF18B. Centromeric localization requires the presence of BUB1 and SGO2.</text>
</comment>
<comment type="alternative products">
    <event type="alternative splicing"/>
    <isoform>
        <id>Q99661-1</id>
        <name>1</name>
        <sequence type="displayed"/>
    </isoform>
    <isoform>
        <id>Q99661-2</id>
        <name>2</name>
        <name>tsMCAK</name>
        <sequence type="described" ref="VSP_002866"/>
    </isoform>
</comment>
<comment type="tissue specificity">
    <text evidence="7 16">Expressed at high levels in thymus and testis, at low levels in small intestine, the mucosal lining of colon, and placenta, and at very low levels in spleen and ovary; expression is not detected in prostate, peripheral blood Leukocytes, heart, brain, lung, liver, skeletal muscle, kidney or pancreas. Isoform 2 is testis-specific.</text>
</comment>
<comment type="developmental stage">
    <text evidence="7">Isoform 2 is expressed in fetal testis.</text>
</comment>
<comment type="domain">
    <text evidence="12">The microtubule tip localization signal (MtLS) motif; mediates interaction with MAPRE1 and targeting to the growing microtubule plus ends.</text>
</comment>
<comment type="PTM">
    <text evidence="8">Phosphorylation by AURKB, regulates association with centromeres and kinetochores and the microtubule depolymerization activity.</text>
</comment>
<comment type="PTM">
    <text evidence="13">Ubiquitinated.</text>
</comment>
<comment type="similarity">
    <text evidence="4">Belongs to the TRAFAC class myosin-kinesin ATPase superfamily. Kinesin family. MCAK/KIF2 subfamily.</text>
</comment>
<sequence>MAMDSSLQARLFPGLAIKIQRSNGLIHSANVRTVNLEKSCVSVEWAEGGATKGKEIDFDDVAAINPELLQLLPLHPKDNLPLQENVTIQKQKRRSVNSKIPAPKESLRSRSTRMSTVSELRITAQENDMEVELPAAANSRKQFSVPPAPTRPSCPAVAEIPLRMVSEEMEEQVHSIRGSSSANPVNSVRRKSCLVKEVEKMKNKREEKKAQNSEMRMKRAQEYDSSFPNWEFARMIKEFRATLECHPLTMTDPIEEHRICVCVRKRPLNKQELAKKEIDVISIPSKCLLLVHEPKLKVDLTKYLENQAFCFDFAFDETASNEVVYRFTARPLVQTIFEGGKATCFAYGQTGSGKTHTMGGDLSGKAQNASKGIYAMASRDVFLLKNQPCYRKLGLEVYVTFFEIYNGKLFDLLNKKAKLRVLEDGKQQVQVVGLQEHLVNSADDVIKMIDMGSACRTSGQTFANSNSSRSHACFQIILRAKGRMHGKFSLVDLAGNERGADTSSADRQTRMEGAEINKSLLALKECIRALGQNKAHTPFRESKLTQVLRDSFIGENSRTCMIATISPGISSCEYTLNTLRYADRVKELSPHSGPSGEQLIQMETEEMEACSNGALIPGNLSKEEEELSSQMSSFNEAMTQIRELEEKAMEELKEIIQQGPDWLELSEMTEQPDYDLETFVNKAESALAQQAKHFSALRDVIKALRLAMQLEEQASRQISSKKRPQ</sequence>
<evidence type="ECO:0000250" key="1"/>
<evidence type="ECO:0000250" key="2">
    <source>
        <dbReference type="UniProtKB" id="P70096"/>
    </source>
</evidence>
<evidence type="ECO:0000255" key="3"/>
<evidence type="ECO:0000255" key="4">
    <source>
        <dbReference type="PROSITE-ProRule" id="PRU00283"/>
    </source>
</evidence>
<evidence type="ECO:0000256" key="5">
    <source>
        <dbReference type="SAM" id="MobiDB-lite"/>
    </source>
</evidence>
<evidence type="ECO:0000269" key="6">
    <source>
    </source>
</evidence>
<evidence type="ECO:0000269" key="7">
    <source>
    </source>
</evidence>
<evidence type="ECO:0000269" key="8">
    <source>
    </source>
</evidence>
<evidence type="ECO:0000269" key="9">
    <source>
    </source>
</evidence>
<evidence type="ECO:0000269" key="10">
    <source>
    </source>
</evidence>
<evidence type="ECO:0000269" key="11">
    <source>
    </source>
</evidence>
<evidence type="ECO:0000269" key="12">
    <source>
    </source>
</evidence>
<evidence type="ECO:0000269" key="13">
    <source>
    </source>
</evidence>
<evidence type="ECO:0000269" key="14">
    <source>
    </source>
</evidence>
<evidence type="ECO:0000269" key="15">
    <source>
    </source>
</evidence>
<evidence type="ECO:0000269" key="16">
    <source>
    </source>
</evidence>
<evidence type="ECO:0000269" key="17">
    <source ref="26"/>
</evidence>
<evidence type="ECO:0000269" key="18">
    <source ref="5"/>
</evidence>
<evidence type="ECO:0000303" key="19">
    <source>
    </source>
</evidence>
<evidence type="ECO:0000305" key="20"/>
<evidence type="ECO:0007744" key="21">
    <source>
    </source>
</evidence>
<evidence type="ECO:0007744" key="22">
    <source>
    </source>
</evidence>
<evidence type="ECO:0007744" key="23">
    <source>
    </source>
</evidence>
<evidence type="ECO:0007744" key="24">
    <source>
    </source>
</evidence>
<evidence type="ECO:0007829" key="25">
    <source>
        <dbReference type="PDB" id="2HEH"/>
    </source>
</evidence>
<evidence type="ECO:0007829" key="26">
    <source>
        <dbReference type="PDB" id="4UBF"/>
    </source>
</evidence>
<evidence type="ECO:0007829" key="27">
    <source>
        <dbReference type="PDB" id="4Y05"/>
    </source>
</evidence>
<evidence type="ECO:0007829" key="28">
    <source>
        <dbReference type="PDB" id="5MIO"/>
    </source>
</evidence>
<name>KIF2C_HUMAN</name>
<dbReference type="EMBL" id="U63743">
    <property type="protein sequence ID" value="AAC27660.1"/>
    <property type="molecule type" value="mRNA"/>
</dbReference>
<dbReference type="EMBL" id="AY026505">
    <property type="protein sequence ID" value="AAK20168.1"/>
    <property type="molecule type" value="mRNA"/>
</dbReference>
<dbReference type="EMBL" id="BT006759">
    <property type="protein sequence ID" value="AAP35405.1"/>
    <property type="molecule type" value="mRNA"/>
</dbReference>
<dbReference type="EMBL" id="CR450302">
    <property type="protein sequence ID" value="CAG29298.1"/>
    <property type="molecule type" value="mRNA"/>
</dbReference>
<dbReference type="EMBL" id="AB264115">
    <property type="protein sequence ID" value="BAG50306.1"/>
    <property type="molecule type" value="mRNA"/>
</dbReference>
<dbReference type="EMBL" id="AL592166">
    <property type="status" value="NOT_ANNOTATED_CDS"/>
    <property type="molecule type" value="Genomic_DNA"/>
</dbReference>
<dbReference type="EMBL" id="CH471059">
    <property type="protein sequence ID" value="EAX07025.1"/>
    <property type="molecule type" value="Genomic_DNA"/>
</dbReference>
<dbReference type="EMBL" id="BC008764">
    <property type="protein sequence ID" value="AAH08764.1"/>
    <property type="molecule type" value="mRNA"/>
</dbReference>
<dbReference type="EMBL" id="BC014924">
    <property type="protein sequence ID" value="AAH14924.1"/>
    <property type="molecule type" value="mRNA"/>
</dbReference>
<dbReference type="CCDS" id="CCDS512.1">
    <molecule id="Q99661-1"/>
</dbReference>
<dbReference type="CCDS" id="CCDS72774.1">
    <molecule id="Q99661-2"/>
</dbReference>
<dbReference type="RefSeq" id="NP_001284584.1">
    <property type="nucleotide sequence ID" value="NM_001297655.1"/>
</dbReference>
<dbReference type="RefSeq" id="NP_001284585.1">
    <molecule id="Q99661-2"/>
    <property type="nucleotide sequence ID" value="NM_001297656.2"/>
</dbReference>
<dbReference type="RefSeq" id="NP_001284586.1">
    <property type="nucleotide sequence ID" value="NM_001297657.1"/>
</dbReference>
<dbReference type="RefSeq" id="NP_006836.2">
    <molecule id="Q99661-1"/>
    <property type="nucleotide sequence ID" value="NM_006845.4"/>
</dbReference>
<dbReference type="PDB" id="2HEH">
    <property type="method" value="X-ray"/>
    <property type="resolution" value="2.15 A"/>
    <property type="chains" value="A=225-593"/>
</dbReference>
<dbReference type="PDB" id="4UBF">
    <property type="method" value="X-ray"/>
    <property type="resolution" value="3.00 A"/>
    <property type="chains" value="A/B/C/D=225-593, P=709-720"/>
</dbReference>
<dbReference type="PDB" id="4Y05">
    <property type="method" value="X-ray"/>
    <property type="resolution" value="2.59 A"/>
    <property type="chains" value="A=216-599"/>
</dbReference>
<dbReference type="PDB" id="5MIO">
    <property type="method" value="X-ray"/>
    <property type="resolution" value="3.19 A"/>
    <property type="chains" value="C=216-598"/>
</dbReference>
<dbReference type="PDBsum" id="2HEH"/>
<dbReference type="PDBsum" id="4UBF"/>
<dbReference type="PDBsum" id="4Y05"/>
<dbReference type="PDBsum" id="5MIO"/>
<dbReference type="SMR" id="Q99661"/>
<dbReference type="BioGRID" id="116195">
    <property type="interactions" value="192"/>
</dbReference>
<dbReference type="ELM" id="Q99661"/>
<dbReference type="FunCoup" id="Q99661">
    <property type="interactions" value="1267"/>
</dbReference>
<dbReference type="IntAct" id="Q99661">
    <property type="interactions" value="121"/>
</dbReference>
<dbReference type="MINT" id="Q99661"/>
<dbReference type="STRING" id="9606.ENSP00000361298"/>
<dbReference type="BindingDB" id="Q99661"/>
<dbReference type="ChEMBL" id="CHEMBL5967"/>
<dbReference type="DrugBank" id="DB04395">
    <property type="generic name" value="Phosphoaminophosphonic Acid-Adenylate Ester"/>
</dbReference>
<dbReference type="GlyGen" id="Q99661">
    <property type="glycosylation" value="1 site, 1 O-linked glycan (1 site)"/>
</dbReference>
<dbReference type="iPTMnet" id="Q99661"/>
<dbReference type="MetOSite" id="Q99661"/>
<dbReference type="PhosphoSitePlus" id="Q99661"/>
<dbReference type="SwissPalm" id="Q99661"/>
<dbReference type="BioMuta" id="KIF2C"/>
<dbReference type="DMDM" id="20141607"/>
<dbReference type="jPOST" id="Q99661"/>
<dbReference type="MassIVE" id="Q99661"/>
<dbReference type="PaxDb" id="9606-ENSP00000361298"/>
<dbReference type="PeptideAtlas" id="Q99661"/>
<dbReference type="ProteomicsDB" id="78382">
    <molecule id="Q99661-1"/>
</dbReference>
<dbReference type="ProteomicsDB" id="78383">
    <molecule id="Q99661-2"/>
</dbReference>
<dbReference type="Pumba" id="Q99661"/>
<dbReference type="Antibodypedia" id="1212">
    <property type="antibodies" value="496 antibodies from 34 providers"/>
</dbReference>
<dbReference type="CPTC" id="Q99661">
    <property type="antibodies" value="3 antibodies"/>
</dbReference>
<dbReference type="DNASU" id="11004"/>
<dbReference type="Ensembl" id="ENST00000372217.5">
    <molecule id="Q99661-2"/>
    <property type="protein sequence ID" value="ENSP00000361291.1"/>
    <property type="gene ID" value="ENSG00000142945.13"/>
</dbReference>
<dbReference type="Ensembl" id="ENST00000372224.9">
    <molecule id="Q99661-1"/>
    <property type="protein sequence ID" value="ENSP00000361298.4"/>
    <property type="gene ID" value="ENSG00000142945.13"/>
</dbReference>
<dbReference type="GeneID" id="11004"/>
<dbReference type="KEGG" id="hsa:11004"/>
<dbReference type="MANE-Select" id="ENST00000372224.9">
    <property type="protein sequence ID" value="ENSP00000361298.4"/>
    <property type="RefSeq nucleotide sequence ID" value="NM_006845.4"/>
    <property type="RefSeq protein sequence ID" value="NP_006836.2"/>
</dbReference>
<dbReference type="UCSC" id="uc001cmg.5">
    <molecule id="Q99661-1"/>
    <property type="organism name" value="human"/>
</dbReference>
<dbReference type="AGR" id="HGNC:6393"/>
<dbReference type="CTD" id="11004"/>
<dbReference type="DisGeNET" id="11004"/>
<dbReference type="GeneCards" id="KIF2C"/>
<dbReference type="HGNC" id="HGNC:6393">
    <property type="gene designation" value="KIF2C"/>
</dbReference>
<dbReference type="HPA" id="ENSG00000142945">
    <property type="expression patterns" value="Group enriched (bone marrow, lymphoid tissue, testis)"/>
</dbReference>
<dbReference type="MIM" id="604538">
    <property type="type" value="gene"/>
</dbReference>
<dbReference type="neXtProt" id="NX_Q99661"/>
<dbReference type="OpenTargets" id="ENSG00000142945"/>
<dbReference type="PharmGKB" id="PA30182"/>
<dbReference type="VEuPathDB" id="HostDB:ENSG00000142945"/>
<dbReference type="eggNOG" id="KOG0246">
    <property type="taxonomic scope" value="Eukaryota"/>
</dbReference>
<dbReference type="GeneTree" id="ENSGT00940000154046"/>
<dbReference type="HOGENOM" id="CLU_001485_19_1_1"/>
<dbReference type="InParanoid" id="Q99661"/>
<dbReference type="OMA" id="RTTLECH"/>
<dbReference type="OrthoDB" id="3176171at2759"/>
<dbReference type="PAN-GO" id="Q99661">
    <property type="GO annotations" value="8 GO annotations based on evolutionary models"/>
</dbReference>
<dbReference type="PhylomeDB" id="Q99661"/>
<dbReference type="TreeFam" id="TF105222"/>
<dbReference type="BRENDA" id="5.6.1.3">
    <property type="organism ID" value="2681"/>
</dbReference>
<dbReference type="PathwayCommons" id="Q99661"/>
<dbReference type="Reactome" id="R-HSA-141444">
    <property type="pathway name" value="Amplification of signal from unattached kinetochores via a MAD2 inhibitory signal"/>
</dbReference>
<dbReference type="Reactome" id="R-HSA-2132295">
    <property type="pathway name" value="MHC class II antigen presentation"/>
</dbReference>
<dbReference type="Reactome" id="R-HSA-2467813">
    <property type="pathway name" value="Separation of Sister Chromatids"/>
</dbReference>
<dbReference type="Reactome" id="R-HSA-2500257">
    <property type="pathway name" value="Resolution of Sister Chromatid Cohesion"/>
</dbReference>
<dbReference type="Reactome" id="R-HSA-5663220">
    <property type="pathway name" value="RHO GTPases Activate Formins"/>
</dbReference>
<dbReference type="Reactome" id="R-HSA-6811434">
    <property type="pathway name" value="COPI-dependent Golgi-to-ER retrograde traffic"/>
</dbReference>
<dbReference type="Reactome" id="R-HSA-68877">
    <property type="pathway name" value="Mitotic Prometaphase"/>
</dbReference>
<dbReference type="Reactome" id="R-HSA-9648025">
    <property type="pathway name" value="EML4 and NUDC in mitotic spindle formation"/>
</dbReference>
<dbReference type="Reactome" id="R-HSA-983189">
    <property type="pathway name" value="Kinesins"/>
</dbReference>
<dbReference type="SignaLink" id="Q99661"/>
<dbReference type="SIGNOR" id="Q99661"/>
<dbReference type="BioGRID-ORCS" id="11004">
    <property type="hits" value="185 hits in 1177 CRISPR screens"/>
</dbReference>
<dbReference type="CD-CODE" id="91857CE7">
    <property type="entry name" value="Nucleolus"/>
</dbReference>
<dbReference type="CD-CODE" id="FB4E32DD">
    <property type="entry name" value="Presynaptic clusters and postsynaptic densities"/>
</dbReference>
<dbReference type="ChiTaRS" id="KIF2C">
    <property type="organism name" value="human"/>
</dbReference>
<dbReference type="EvolutionaryTrace" id="Q99661"/>
<dbReference type="GeneWiki" id="KIF2C"/>
<dbReference type="GenomeRNAi" id="11004"/>
<dbReference type="Pharos" id="Q99661">
    <property type="development level" value="Tbio"/>
</dbReference>
<dbReference type="PRO" id="PR:Q99661"/>
<dbReference type="Proteomes" id="UP000005640">
    <property type="component" value="Chromosome 1"/>
</dbReference>
<dbReference type="RNAct" id="Q99661">
    <property type="molecule type" value="protein"/>
</dbReference>
<dbReference type="Bgee" id="ENSG00000142945">
    <property type="expression patterns" value="Expressed in secondary oocyte and 132 other cell types or tissues"/>
</dbReference>
<dbReference type="ExpressionAtlas" id="Q99661">
    <property type="expression patterns" value="baseline and differential"/>
</dbReference>
<dbReference type="GO" id="GO:0005813">
    <property type="term" value="C:centrosome"/>
    <property type="evidence" value="ECO:0000318"/>
    <property type="project" value="GO_Central"/>
</dbReference>
<dbReference type="GO" id="GO:0000775">
    <property type="term" value="C:chromosome, centromeric region"/>
    <property type="evidence" value="ECO:0000314"/>
    <property type="project" value="UniProtKB"/>
</dbReference>
<dbReference type="GO" id="GO:0005737">
    <property type="term" value="C:cytoplasm"/>
    <property type="evidence" value="ECO:0000318"/>
    <property type="project" value="GO_Central"/>
</dbReference>
<dbReference type="GO" id="GO:0005829">
    <property type="term" value="C:cytosol"/>
    <property type="evidence" value="ECO:0000304"/>
    <property type="project" value="Reactome"/>
</dbReference>
<dbReference type="GO" id="GO:0098978">
    <property type="term" value="C:glutamatergic synapse"/>
    <property type="evidence" value="ECO:0007669"/>
    <property type="project" value="Ensembl"/>
</dbReference>
<dbReference type="GO" id="GO:0005871">
    <property type="term" value="C:kinesin complex"/>
    <property type="evidence" value="ECO:0000318"/>
    <property type="project" value="GO_Central"/>
</dbReference>
<dbReference type="GO" id="GO:0000776">
    <property type="term" value="C:kinetochore"/>
    <property type="evidence" value="ECO:0000314"/>
    <property type="project" value="UniProtKB"/>
</dbReference>
<dbReference type="GO" id="GO:0016020">
    <property type="term" value="C:membrane"/>
    <property type="evidence" value="ECO:0007005"/>
    <property type="project" value="UniProtKB"/>
</dbReference>
<dbReference type="GO" id="GO:0005874">
    <property type="term" value="C:microtubule"/>
    <property type="evidence" value="ECO:0000318"/>
    <property type="project" value="GO_Central"/>
</dbReference>
<dbReference type="GO" id="GO:0015630">
    <property type="term" value="C:microtubule cytoskeleton"/>
    <property type="evidence" value="ECO:0000314"/>
    <property type="project" value="LIFEdb"/>
</dbReference>
<dbReference type="GO" id="GO:0035371">
    <property type="term" value="C:microtubule plus-end"/>
    <property type="evidence" value="ECO:0000314"/>
    <property type="project" value="UniProtKB"/>
</dbReference>
<dbReference type="GO" id="GO:0005634">
    <property type="term" value="C:nucleus"/>
    <property type="evidence" value="ECO:0007669"/>
    <property type="project" value="UniProtKB-SubCell"/>
</dbReference>
<dbReference type="GO" id="GO:0098794">
    <property type="term" value="C:postsynapse"/>
    <property type="evidence" value="ECO:0007669"/>
    <property type="project" value="Ensembl"/>
</dbReference>
<dbReference type="GO" id="GO:0098793">
    <property type="term" value="C:presynapse"/>
    <property type="evidence" value="ECO:0007669"/>
    <property type="project" value="Ensembl"/>
</dbReference>
<dbReference type="GO" id="GO:0005819">
    <property type="term" value="C:spindle"/>
    <property type="evidence" value="ECO:0000318"/>
    <property type="project" value="GO_Central"/>
</dbReference>
<dbReference type="GO" id="GO:0005524">
    <property type="term" value="F:ATP binding"/>
    <property type="evidence" value="ECO:0007669"/>
    <property type="project" value="UniProtKB-KW"/>
</dbReference>
<dbReference type="GO" id="GO:0016887">
    <property type="term" value="F:ATP hydrolysis activity"/>
    <property type="evidence" value="ECO:0000318"/>
    <property type="project" value="GO_Central"/>
</dbReference>
<dbReference type="GO" id="GO:0019237">
    <property type="term" value="F:centromeric DNA binding"/>
    <property type="evidence" value="ECO:0000304"/>
    <property type="project" value="ProtInc"/>
</dbReference>
<dbReference type="GO" id="GO:0008017">
    <property type="term" value="F:microtubule binding"/>
    <property type="evidence" value="ECO:0000318"/>
    <property type="project" value="GO_Central"/>
</dbReference>
<dbReference type="GO" id="GO:0003777">
    <property type="term" value="F:microtubule motor activity"/>
    <property type="evidence" value="ECO:0000318"/>
    <property type="project" value="GO_Central"/>
</dbReference>
<dbReference type="GO" id="GO:0051010">
    <property type="term" value="F:microtubule plus-end binding"/>
    <property type="evidence" value="ECO:0000314"/>
    <property type="project" value="UniProtKB"/>
</dbReference>
<dbReference type="GO" id="GO:0051315">
    <property type="term" value="P:attachment of mitotic spindle microtubules to kinetochore"/>
    <property type="evidence" value="ECO:0000315"/>
    <property type="project" value="UniProtKB"/>
</dbReference>
<dbReference type="GO" id="GO:0051301">
    <property type="term" value="P:cell division"/>
    <property type="evidence" value="ECO:0007669"/>
    <property type="project" value="UniProtKB-KW"/>
</dbReference>
<dbReference type="GO" id="GO:0030951">
    <property type="term" value="P:establishment or maintenance of microtubule cytoskeleton polarity"/>
    <property type="evidence" value="ECO:0000315"/>
    <property type="project" value="HGNC-UCL"/>
</dbReference>
<dbReference type="GO" id="GO:0051310">
    <property type="term" value="P:metaphase chromosome alignment"/>
    <property type="evidence" value="ECO:0000315"/>
    <property type="project" value="UniProtKB"/>
</dbReference>
<dbReference type="GO" id="GO:0007019">
    <property type="term" value="P:microtubule depolymerization"/>
    <property type="evidence" value="ECO:0000314"/>
    <property type="project" value="UniProtKB"/>
</dbReference>
<dbReference type="GO" id="GO:0007018">
    <property type="term" value="P:microtubule-based movement"/>
    <property type="evidence" value="ECO:0000318"/>
    <property type="project" value="GO_Central"/>
</dbReference>
<dbReference type="GO" id="GO:0007080">
    <property type="term" value="P:mitotic metaphase chromosome alignment"/>
    <property type="evidence" value="ECO:0000315"/>
    <property type="project" value="UniProtKB"/>
</dbReference>
<dbReference type="GO" id="GO:0099188">
    <property type="term" value="P:postsynaptic cytoskeleton organization"/>
    <property type="evidence" value="ECO:0007669"/>
    <property type="project" value="Ensembl"/>
</dbReference>
<dbReference type="GO" id="GO:0051983">
    <property type="term" value="P:regulation of chromosome segregation"/>
    <property type="evidence" value="ECO:0000315"/>
    <property type="project" value="UniProtKB"/>
</dbReference>
<dbReference type="GO" id="GO:0098696">
    <property type="term" value="P:regulation of neurotransmitter receptor localization to postsynaptic specialization membrane"/>
    <property type="evidence" value="ECO:0007669"/>
    <property type="project" value="Ensembl"/>
</dbReference>
<dbReference type="CDD" id="cd01367">
    <property type="entry name" value="KISc_KIF2_like"/>
    <property type="match status" value="1"/>
</dbReference>
<dbReference type="FunFam" id="3.40.850.10:FF:000006">
    <property type="entry name" value="Kinesin-like protein"/>
    <property type="match status" value="1"/>
</dbReference>
<dbReference type="Gene3D" id="3.40.850.10">
    <property type="entry name" value="Kinesin motor domain"/>
    <property type="match status" value="1"/>
</dbReference>
<dbReference type="InterPro" id="IPR054473">
    <property type="entry name" value="KIF2A-like_N"/>
</dbReference>
<dbReference type="InterPro" id="IPR027640">
    <property type="entry name" value="Kinesin-like_fam"/>
</dbReference>
<dbReference type="InterPro" id="IPR019821">
    <property type="entry name" value="Kinesin_motor_CS"/>
</dbReference>
<dbReference type="InterPro" id="IPR001752">
    <property type="entry name" value="Kinesin_motor_dom"/>
</dbReference>
<dbReference type="InterPro" id="IPR036961">
    <property type="entry name" value="Kinesin_motor_dom_sf"/>
</dbReference>
<dbReference type="InterPro" id="IPR027417">
    <property type="entry name" value="P-loop_NTPase"/>
</dbReference>
<dbReference type="PANTHER" id="PTHR47971:SF25">
    <property type="entry name" value="KINESIN-LIKE PROTEIN KIF2C"/>
    <property type="match status" value="1"/>
</dbReference>
<dbReference type="PANTHER" id="PTHR47971">
    <property type="entry name" value="KINESIN-RELATED PROTEIN 6"/>
    <property type="match status" value="1"/>
</dbReference>
<dbReference type="Pfam" id="PF22923">
    <property type="entry name" value="KIF2A-like_1st"/>
    <property type="match status" value="1"/>
</dbReference>
<dbReference type="Pfam" id="PF00225">
    <property type="entry name" value="Kinesin"/>
    <property type="match status" value="1"/>
</dbReference>
<dbReference type="PRINTS" id="PR00380">
    <property type="entry name" value="KINESINHEAVY"/>
</dbReference>
<dbReference type="SMART" id="SM00129">
    <property type="entry name" value="KISc"/>
    <property type="match status" value="1"/>
</dbReference>
<dbReference type="SUPFAM" id="SSF52540">
    <property type="entry name" value="P-loop containing nucleoside triphosphate hydrolases"/>
    <property type="match status" value="1"/>
</dbReference>
<dbReference type="PROSITE" id="PS00411">
    <property type="entry name" value="KINESIN_MOTOR_1"/>
    <property type="match status" value="1"/>
</dbReference>
<dbReference type="PROSITE" id="PS50067">
    <property type="entry name" value="KINESIN_MOTOR_2"/>
    <property type="match status" value="1"/>
</dbReference>